<dbReference type="EMBL" id="CX134225">
    <property type="status" value="NOT_ANNOTATED_CDS"/>
    <property type="molecule type" value="mRNA"/>
</dbReference>
<dbReference type="SMR" id="P0C8Y6"/>
<dbReference type="Proteomes" id="UP000186698">
    <property type="component" value="Unplaced"/>
</dbReference>
<dbReference type="GO" id="GO:0005886">
    <property type="term" value="C:plasma membrane"/>
    <property type="evidence" value="ECO:0007669"/>
    <property type="project" value="UniProtKB-SubCell"/>
</dbReference>
<dbReference type="GO" id="GO:0034237">
    <property type="term" value="F:protein kinase A regulatory subunit binding"/>
    <property type="evidence" value="ECO:0007669"/>
    <property type="project" value="InterPro"/>
</dbReference>
<dbReference type="InterPro" id="IPR027969">
    <property type="entry name" value="Small_membr_AKAP"/>
</dbReference>
<dbReference type="PANTHER" id="PTHR36471">
    <property type="entry name" value="SMALL MEMBRANE A-KINASE ANCHOR PROTEIN"/>
    <property type="match status" value="1"/>
</dbReference>
<dbReference type="PANTHER" id="PTHR36471:SF1">
    <property type="entry name" value="SMALL MEMBRANE A-KINASE ANCHOR PROTEIN"/>
    <property type="match status" value="1"/>
</dbReference>
<dbReference type="Pfam" id="PF15127">
    <property type="entry name" value="SmAKAP"/>
    <property type="match status" value="1"/>
</dbReference>
<sequence>MGCIKSKQDCTVHKTIQLTRNQEKDEMHNKELVGLVQANQEDSKLCSCSASPLLLEYAHRLSEDIVNKAVRQWAEVDSKYSDIPYIESDAI</sequence>
<comment type="function">
    <text evidence="1">Binds to type I regulatory subunits of protein kinase A and may anchor/target them to the plasma membrane.</text>
</comment>
<comment type="subcellular location">
    <subcellularLocation>
        <location evidence="1">Cell membrane</location>
    </subcellularLocation>
</comment>
<comment type="PTM">
    <text evidence="1">May be palmitoylated at Cys-3.</text>
</comment>
<comment type="similarity">
    <text evidence="3">Belongs to the small membrane AKAP family.</text>
</comment>
<protein>
    <recommendedName>
        <fullName>Small membrane A-kinase anchor protein</fullName>
        <shortName>Small membrane AKAP</shortName>
        <shortName>smAKAP</shortName>
    </recommendedName>
</protein>
<evidence type="ECO:0000250" key="1"/>
<evidence type="ECO:0000255" key="2"/>
<evidence type="ECO:0000305" key="3"/>
<proteinExistence type="inferred from homology"/>
<feature type="initiator methionine" description="Removed" evidence="2">
    <location>
        <position position="1"/>
    </location>
</feature>
<feature type="chain" id="PRO_0000366965" description="Small membrane A-kinase anchor protein">
    <location>
        <begin position="2"/>
        <end position="91"/>
    </location>
</feature>
<feature type="lipid moiety-binding region" description="N-myristoyl glycine" evidence="2">
    <location>
        <position position="2"/>
    </location>
</feature>
<reference key="1">
    <citation type="submission" date="2004-12" db="EMBL/GenBank/DDBJ databases">
        <authorList>
            <consortium name="NIH - Xenopus Gene Collection (XGC) project"/>
        </authorList>
    </citation>
    <scope>NUCLEOTIDE SEQUENCE [LARGE SCALE MRNA]</scope>
    <source>
        <tissue>Testis</tissue>
    </source>
</reference>
<keyword id="KW-1003">Cell membrane</keyword>
<keyword id="KW-0449">Lipoprotein</keyword>
<keyword id="KW-0472">Membrane</keyword>
<keyword id="KW-0519">Myristate</keyword>
<keyword id="KW-0564">Palmitate</keyword>
<keyword id="KW-1185">Reference proteome</keyword>
<organism>
    <name type="scientific">Xenopus laevis</name>
    <name type="common">African clawed frog</name>
    <dbReference type="NCBI Taxonomy" id="8355"/>
    <lineage>
        <taxon>Eukaryota</taxon>
        <taxon>Metazoa</taxon>
        <taxon>Chordata</taxon>
        <taxon>Craniata</taxon>
        <taxon>Vertebrata</taxon>
        <taxon>Euteleostomi</taxon>
        <taxon>Amphibia</taxon>
        <taxon>Batrachia</taxon>
        <taxon>Anura</taxon>
        <taxon>Pipoidea</taxon>
        <taxon>Pipidae</taxon>
        <taxon>Xenopodinae</taxon>
        <taxon>Xenopus</taxon>
        <taxon>Xenopus</taxon>
    </lineage>
</organism>
<name>SMAKA_XENLA</name>
<accession>P0C8Y6</accession>